<sequence>MVKAVAVLASSEGVKGTIFFSQEGDGPTSVTGSVSGLKPGLHGFHVHALGDTTNGCMSTGPHFNPTGKEHGAPQDENRHAGDLGNITAGADGVANVNVSDSQIPLTGAHSIIGRAVVVHADPDDLGKGGHELSKTTGNAGGRVACGIIGLQG</sequence>
<feature type="initiator methionine" description="Removed" evidence="2">
    <location>
        <position position="1"/>
    </location>
</feature>
<feature type="chain" id="PRO_0000164149" description="Superoxide dismutase [Cu-Zn] 2">
    <location>
        <begin position="2"/>
        <end position="152"/>
    </location>
</feature>
<feature type="binding site" evidence="1">
    <location>
        <position position="45"/>
    </location>
    <ligand>
        <name>Cu cation</name>
        <dbReference type="ChEBI" id="CHEBI:23378"/>
        <note>catalytic</note>
    </ligand>
</feature>
<feature type="binding site" evidence="1">
    <location>
        <position position="47"/>
    </location>
    <ligand>
        <name>Cu cation</name>
        <dbReference type="ChEBI" id="CHEBI:23378"/>
        <note>catalytic</note>
    </ligand>
</feature>
<feature type="binding site" evidence="1">
    <location>
        <position position="62"/>
    </location>
    <ligand>
        <name>Cu cation</name>
        <dbReference type="ChEBI" id="CHEBI:23378"/>
        <note>catalytic</note>
    </ligand>
</feature>
<feature type="binding site" evidence="1">
    <location>
        <position position="62"/>
    </location>
    <ligand>
        <name>Zn(2+)</name>
        <dbReference type="ChEBI" id="CHEBI:29105"/>
        <note>structural</note>
    </ligand>
</feature>
<feature type="binding site" evidence="1">
    <location>
        <position position="70"/>
    </location>
    <ligand>
        <name>Zn(2+)</name>
        <dbReference type="ChEBI" id="CHEBI:29105"/>
        <note>structural</note>
    </ligand>
</feature>
<feature type="binding site" evidence="1">
    <location>
        <position position="79"/>
    </location>
    <ligand>
        <name>Zn(2+)</name>
        <dbReference type="ChEBI" id="CHEBI:29105"/>
        <note>structural</note>
    </ligand>
</feature>
<feature type="binding site" evidence="1">
    <location>
        <position position="82"/>
    </location>
    <ligand>
        <name>Zn(2+)</name>
        <dbReference type="ChEBI" id="CHEBI:29105"/>
        <note>structural</note>
    </ligand>
</feature>
<feature type="binding site" evidence="1">
    <location>
        <position position="119"/>
    </location>
    <ligand>
        <name>Cu cation</name>
        <dbReference type="ChEBI" id="CHEBI:23378"/>
        <note>catalytic</note>
    </ligand>
</feature>
<feature type="disulfide bond" evidence="1">
    <location>
        <begin position="56"/>
        <end position="145"/>
    </location>
</feature>
<gene>
    <name type="primary">SODCC2</name>
    <name type="synonym">SODCC.2</name>
    <name type="ordered locus">Os07g0665200</name>
    <name type="ordered locus">LOC_Os07g46990</name>
    <name type="ORF">OJ1343_D04.132</name>
    <name type="ORF">P0450A04.103</name>
</gene>
<name>SODC2_ORYSJ</name>
<organism>
    <name type="scientific">Oryza sativa subsp. japonica</name>
    <name type="common">Rice</name>
    <dbReference type="NCBI Taxonomy" id="39947"/>
    <lineage>
        <taxon>Eukaryota</taxon>
        <taxon>Viridiplantae</taxon>
        <taxon>Streptophyta</taxon>
        <taxon>Embryophyta</taxon>
        <taxon>Tracheophyta</taxon>
        <taxon>Spermatophyta</taxon>
        <taxon>Magnoliopsida</taxon>
        <taxon>Liliopsida</taxon>
        <taxon>Poales</taxon>
        <taxon>Poaceae</taxon>
        <taxon>BOP clade</taxon>
        <taxon>Oryzoideae</taxon>
        <taxon>Oryzeae</taxon>
        <taxon>Oryzinae</taxon>
        <taxon>Oryza</taxon>
        <taxon>Oryza sativa</taxon>
    </lineage>
</organism>
<comment type="function">
    <text>Destroys radicals which are normally produced within the cells and which are toxic to biological systems.</text>
</comment>
<comment type="catalytic activity">
    <reaction>
        <text>2 superoxide + 2 H(+) = H2O2 + O2</text>
        <dbReference type="Rhea" id="RHEA:20696"/>
        <dbReference type="ChEBI" id="CHEBI:15378"/>
        <dbReference type="ChEBI" id="CHEBI:15379"/>
        <dbReference type="ChEBI" id="CHEBI:16240"/>
        <dbReference type="ChEBI" id="CHEBI:18421"/>
        <dbReference type="EC" id="1.15.1.1"/>
    </reaction>
</comment>
<comment type="cofactor">
    <cofactor evidence="1">
        <name>Cu cation</name>
        <dbReference type="ChEBI" id="CHEBI:23378"/>
    </cofactor>
    <text evidence="1">Binds 1 copper ion per subunit.</text>
</comment>
<comment type="cofactor">
    <cofactor evidence="1">
        <name>Zn(2+)</name>
        <dbReference type="ChEBI" id="CHEBI:29105"/>
    </cofactor>
    <text evidence="1">Binds 1 zinc ion per subunit.</text>
</comment>
<comment type="subunit">
    <text>Homodimer.</text>
</comment>
<comment type="subcellular location">
    <subcellularLocation>
        <location>Cytoplasm</location>
    </subcellularLocation>
</comment>
<comment type="similarity">
    <text evidence="3">Belongs to the Cu-Zn superoxide dismutase family.</text>
</comment>
<comment type="sequence caution" evidence="3">
    <conflict type="erroneous gene model prediction">
        <sequence resource="EMBL-CDS" id="BAC10110"/>
    </conflict>
</comment>
<comment type="sequence caution" evidence="3">
    <conflict type="erroneous gene model prediction">
        <sequence resource="EMBL-CDS" id="BAD30565"/>
    </conflict>
</comment>
<comment type="sequence caution" evidence="3">
    <conflict type="erroneous initiation">
        <sequence resource="EMBL-CDS" id="BAT03098"/>
    </conflict>
    <text>Extended N-terminus.</text>
</comment>
<accession>P28757</accession>
<accession>A0A0N7KP08</accession>
<accession>Q0D3U5</accession>
<accession>Q8LIB7</accession>
<keyword id="KW-0049">Antioxidant</keyword>
<keyword id="KW-0186">Copper</keyword>
<keyword id="KW-0963">Cytoplasm</keyword>
<keyword id="KW-0903">Direct protein sequencing</keyword>
<keyword id="KW-1015">Disulfide bond</keyword>
<keyword id="KW-0479">Metal-binding</keyword>
<keyword id="KW-0560">Oxidoreductase</keyword>
<keyword id="KW-1185">Reference proteome</keyword>
<keyword id="KW-0862">Zinc</keyword>
<dbReference type="EC" id="1.15.1.1"/>
<dbReference type="EMBL" id="D01000">
    <property type="protein sequence ID" value="BAA00800.1"/>
    <property type="molecule type" value="mRNA"/>
</dbReference>
<dbReference type="EMBL" id="L19434">
    <property type="protein sequence ID" value="AAC14465.1"/>
    <property type="molecule type" value="Genomic_DNA"/>
</dbReference>
<dbReference type="EMBL" id="EU325984">
    <property type="protein sequence ID" value="ABY52933.1"/>
    <property type="molecule type" value="mRNA"/>
</dbReference>
<dbReference type="EMBL" id="AP003825">
    <property type="protein sequence ID" value="BAC10110.1"/>
    <property type="status" value="ALT_SEQ"/>
    <property type="molecule type" value="Genomic_DNA"/>
</dbReference>
<dbReference type="EMBL" id="AP004274">
    <property type="protein sequence ID" value="BAD30565.1"/>
    <property type="status" value="ALT_SEQ"/>
    <property type="molecule type" value="Genomic_DNA"/>
</dbReference>
<dbReference type="EMBL" id="AP008213">
    <property type="protein sequence ID" value="BAF22478.1"/>
    <property type="molecule type" value="Genomic_DNA"/>
</dbReference>
<dbReference type="EMBL" id="AP014963">
    <property type="protein sequence ID" value="BAT03098.1"/>
    <property type="status" value="ALT_INIT"/>
    <property type="molecule type" value="Genomic_DNA"/>
</dbReference>
<dbReference type="EMBL" id="AK243377">
    <property type="protein sequence ID" value="BAH01571.1"/>
    <property type="molecule type" value="mRNA"/>
</dbReference>
<dbReference type="PIR" id="S21136">
    <property type="entry name" value="S21136"/>
</dbReference>
<dbReference type="RefSeq" id="XP_015647771.1">
    <property type="nucleotide sequence ID" value="XM_015792285.1"/>
</dbReference>
<dbReference type="SMR" id="P28757"/>
<dbReference type="FunCoup" id="P28757">
    <property type="interactions" value="1815"/>
</dbReference>
<dbReference type="STRING" id="39947.P28757"/>
<dbReference type="PaxDb" id="39947-P28757"/>
<dbReference type="EnsemblPlants" id="Os07t0665200-01">
    <property type="protein sequence ID" value="Os07t0665200-01"/>
    <property type="gene ID" value="Os07g0665200"/>
</dbReference>
<dbReference type="Gramene" id="Os07t0665200-01">
    <property type="protein sequence ID" value="Os07t0665200-01"/>
    <property type="gene ID" value="Os07g0665200"/>
</dbReference>
<dbReference type="KEGG" id="dosa:Os07g0665200"/>
<dbReference type="eggNOG" id="KOG0441">
    <property type="taxonomic scope" value="Eukaryota"/>
</dbReference>
<dbReference type="HOGENOM" id="CLU_056632_4_1_1"/>
<dbReference type="InParanoid" id="P28757"/>
<dbReference type="OMA" id="GARYACG"/>
<dbReference type="OrthoDB" id="2015551at2759"/>
<dbReference type="PlantReactome" id="R-OSA-1119403">
    <property type="pathway name" value="Removal of superoxide radicals"/>
</dbReference>
<dbReference type="PlantReactome" id="R-OSA-9611432">
    <property type="pathway name" value="Recognition of fungal and bacterial pathogens and immunity response"/>
</dbReference>
<dbReference type="Proteomes" id="UP000000763">
    <property type="component" value="Chromosome 7"/>
</dbReference>
<dbReference type="Proteomes" id="UP000059680">
    <property type="component" value="Chromosome 7"/>
</dbReference>
<dbReference type="GO" id="GO:0005737">
    <property type="term" value="C:cytoplasm"/>
    <property type="evidence" value="ECO:0007669"/>
    <property type="project" value="UniProtKB-SubCell"/>
</dbReference>
<dbReference type="GO" id="GO:0005507">
    <property type="term" value="F:copper ion binding"/>
    <property type="evidence" value="ECO:0000318"/>
    <property type="project" value="GO_Central"/>
</dbReference>
<dbReference type="GO" id="GO:0004784">
    <property type="term" value="F:superoxide dismutase activity"/>
    <property type="evidence" value="ECO:0000318"/>
    <property type="project" value="GO_Central"/>
</dbReference>
<dbReference type="GO" id="GO:0019430">
    <property type="term" value="P:removal of superoxide radicals"/>
    <property type="evidence" value="ECO:0000318"/>
    <property type="project" value="GO_Central"/>
</dbReference>
<dbReference type="CDD" id="cd00305">
    <property type="entry name" value="Cu-Zn_Superoxide_Dismutase"/>
    <property type="match status" value="1"/>
</dbReference>
<dbReference type="FunFam" id="2.60.40.200:FF:000001">
    <property type="entry name" value="Superoxide dismutase [Cu-Zn]"/>
    <property type="match status" value="1"/>
</dbReference>
<dbReference type="Gene3D" id="2.60.40.200">
    <property type="entry name" value="Superoxide dismutase, copper/zinc binding domain"/>
    <property type="match status" value="1"/>
</dbReference>
<dbReference type="InterPro" id="IPR036423">
    <property type="entry name" value="SOD-like_Cu/Zn_dom_sf"/>
</dbReference>
<dbReference type="InterPro" id="IPR024134">
    <property type="entry name" value="SOD_Cu/Zn_/chaperone"/>
</dbReference>
<dbReference type="InterPro" id="IPR018152">
    <property type="entry name" value="SOD_Cu/Zn_BS"/>
</dbReference>
<dbReference type="InterPro" id="IPR001424">
    <property type="entry name" value="SOD_Cu_Zn_dom"/>
</dbReference>
<dbReference type="PANTHER" id="PTHR10003">
    <property type="entry name" value="SUPEROXIDE DISMUTASE CU-ZN -RELATED"/>
    <property type="match status" value="1"/>
</dbReference>
<dbReference type="Pfam" id="PF00080">
    <property type="entry name" value="Sod_Cu"/>
    <property type="match status" value="1"/>
</dbReference>
<dbReference type="PRINTS" id="PR00068">
    <property type="entry name" value="CUZNDISMTASE"/>
</dbReference>
<dbReference type="SUPFAM" id="SSF49329">
    <property type="entry name" value="Cu,Zn superoxide dismutase-like"/>
    <property type="match status" value="1"/>
</dbReference>
<dbReference type="PROSITE" id="PS00087">
    <property type="entry name" value="SOD_CU_ZN_1"/>
    <property type="match status" value="1"/>
</dbReference>
<dbReference type="PROSITE" id="PS00332">
    <property type="entry name" value="SOD_CU_ZN_2"/>
    <property type="match status" value="1"/>
</dbReference>
<evidence type="ECO:0000250" key="1"/>
<evidence type="ECO:0000269" key="2">
    <source>
    </source>
</evidence>
<evidence type="ECO:0000305" key="3"/>
<reference key="1">
    <citation type="journal article" date="1992" name="Plant Mol. Biol.">
        <title>Nucleotide sequences of two cDNA clones encoding different Cu/Zn-superoxide dismutases expressed in developing rice seed (Oryza sativa L.).</title>
        <authorList>
            <person name="Sakamoto A."/>
            <person name="Ohsuga H."/>
            <person name="Tanaka K."/>
        </authorList>
    </citation>
    <scope>NUCLEOTIDE SEQUENCE [MRNA]</scope>
    <source>
        <strain>cv. Nipponbare</strain>
        <tissue>Seed</tissue>
    </source>
</reference>
<reference key="2">
    <citation type="journal article" date="1992" name="FEBS Lett.">
        <title>Genomic structure of the gene for copper/zinc-superoxide dismutase in rice.</title>
        <authorList>
            <person name="Sakamoto A."/>
            <person name="Okumura T."/>
            <person name="Ohsuga H."/>
            <person name="Tanaka K."/>
        </authorList>
    </citation>
    <scope>NUCLEOTIDE SEQUENCE [GENOMIC DNA]</scope>
    <source>
        <strain>cv. Nipponbare</strain>
    </source>
</reference>
<reference key="3">
    <citation type="submission" date="2007-12" db="EMBL/GenBank/DDBJ databases">
        <title>Construction and characterization of a yeast two-hybrid cDNA library from rice seedling leaves.</title>
        <authorList>
            <person name="Lu L.M."/>
            <person name="Qin M.L."/>
            <person name="Lan H.H."/>
            <person name="Wang P."/>
            <person name="Niu X.Q."/>
            <person name="Wu Z.J."/>
            <person name="Xie L.H."/>
        </authorList>
    </citation>
    <scope>NUCLEOTIDE SEQUENCE [MRNA]</scope>
    <source>
        <strain>cv. Wuyujing 3</strain>
    </source>
</reference>
<reference key="4">
    <citation type="journal article" date="2005" name="Nature">
        <title>The map-based sequence of the rice genome.</title>
        <authorList>
            <consortium name="International rice genome sequencing project (IRGSP)"/>
        </authorList>
    </citation>
    <scope>NUCLEOTIDE SEQUENCE [LARGE SCALE GENOMIC DNA]</scope>
    <source>
        <strain>cv. Nipponbare</strain>
    </source>
</reference>
<reference key="5">
    <citation type="journal article" date="2008" name="Nucleic Acids Res.">
        <title>The rice annotation project database (RAP-DB): 2008 update.</title>
        <authorList>
            <consortium name="The rice annotation project (RAP)"/>
        </authorList>
    </citation>
    <scope>GENOME REANNOTATION</scope>
    <source>
        <strain>cv. Nipponbare</strain>
    </source>
</reference>
<reference key="6">
    <citation type="journal article" date="2013" name="Rice">
        <title>Improvement of the Oryza sativa Nipponbare reference genome using next generation sequence and optical map data.</title>
        <authorList>
            <person name="Kawahara Y."/>
            <person name="de la Bastide M."/>
            <person name="Hamilton J.P."/>
            <person name="Kanamori H."/>
            <person name="McCombie W.R."/>
            <person name="Ouyang S."/>
            <person name="Schwartz D.C."/>
            <person name="Tanaka T."/>
            <person name="Wu J."/>
            <person name="Zhou S."/>
            <person name="Childs K.L."/>
            <person name="Davidson R.M."/>
            <person name="Lin H."/>
            <person name="Quesada-Ocampo L."/>
            <person name="Vaillancourt B."/>
            <person name="Sakai H."/>
            <person name="Lee S.S."/>
            <person name="Kim J."/>
            <person name="Numa H."/>
            <person name="Itoh T."/>
            <person name="Buell C.R."/>
            <person name="Matsumoto T."/>
        </authorList>
    </citation>
    <scope>GENOME REANNOTATION</scope>
    <source>
        <strain>cv. Nipponbare</strain>
    </source>
</reference>
<reference key="7">
    <citation type="submission" date="2006-10" db="EMBL/GenBank/DDBJ databases">
        <title>Oryza sativa full length cDNA.</title>
        <authorList>
            <consortium name="The rice full-length cDNA consortium"/>
        </authorList>
    </citation>
    <scope>NUCLEOTIDE SEQUENCE [LARGE SCALE MRNA]</scope>
    <source>
        <strain>cv. Nipponbare</strain>
    </source>
</reference>
<reference key="8">
    <citation type="journal article" date="2004" name="Nucleic Acids Res.">
        <title>Rice proteome database based on two-dimensional polyacrylamide gel electrophoresis: its status in 2003.</title>
        <authorList>
            <person name="Komatsu S."/>
            <person name="Kojima K."/>
            <person name="Suzuki K."/>
            <person name="Ozaki K."/>
            <person name="Higo K."/>
        </authorList>
    </citation>
    <scope>PROTEIN SEQUENCE OF 2-11</scope>
    <source>
        <strain>cv. Nipponbare</strain>
        <tissue>Panicle</tissue>
        <tissue>Root</tissue>
    </source>
</reference>
<proteinExistence type="evidence at protein level"/>
<protein>
    <recommendedName>
        <fullName>Superoxide dismutase [Cu-Zn] 2</fullName>
        <ecNumber>1.15.1.1</ecNumber>
    </recommendedName>
</protein>